<keyword id="KW-1185">Reference proteome</keyword>
<dbReference type="EMBL" id="FO081383">
    <property type="protein sequence ID" value="CCD71229.1"/>
    <property type="molecule type" value="Genomic_DNA"/>
</dbReference>
<dbReference type="EMBL" id="AF292047">
    <property type="protein sequence ID" value="AAG41143.1"/>
    <property type="molecule type" value="mRNA"/>
</dbReference>
<dbReference type="RefSeq" id="NP_498957.1">
    <property type="nucleotide sequence ID" value="NM_066556.6"/>
</dbReference>
<dbReference type="FunCoup" id="Q9GQ63">
    <property type="interactions" value="812"/>
</dbReference>
<dbReference type="STRING" id="6239.F44E2.9.1"/>
<dbReference type="PaxDb" id="6239-F44E2.9"/>
<dbReference type="PeptideAtlas" id="Q9GQ63"/>
<dbReference type="EnsemblMetazoa" id="F44E2.9.1">
    <property type="protein sequence ID" value="F44E2.9.1"/>
    <property type="gene ID" value="WBGene00018422"/>
</dbReference>
<dbReference type="GeneID" id="176247"/>
<dbReference type="KEGG" id="cel:CELE_F44E2.9"/>
<dbReference type="UCSC" id="F44E2.9">
    <property type="organism name" value="c. elegans"/>
</dbReference>
<dbReference type="AGR" id="WB:WBGene00018422"/>
<dbReference type="CTD" id="176247"/>
<dbReference type="WormBase" id="F44E2.9">
    <property type="protein sequence ID" value="CE26895"/>
    <property type="gene ID" value="WBGene00018422"/>
</dbReference>
<dbReference type="eggNOG" id="ENOG502R8RD">
    <property type="taxonomic scope" value="Eukaryota"/>
</dbReference>
<dbReference type="HOGENOM" id="CLU_2028757_0_0_1"/>
<dbReference type="InParanoid" id="Q9GQ63"/>
<dbReference type="OMA" id="PDFDLYC"/>
<dbReference type="OrthoDB" id="5796838at2759"/>
<dbReference type="PRO" id="PR:Q9GQ63"/>
<dbReference type="Proteomes" id="UP000001940">
    <property type="component" value="Chromosome III"/>
</dbReference>
<dbReference type="Bgee" id="WBGene00018422">
    <property type="expression patterns" value="Expressed in pharyngeal muscle cell (C elegans) and 4 other cell types or tissues"/>
</dbReference>
<feature type="chain" id="PRO_0000065343" description="Uncharacterized protein F44E2.9">
    <location>
        <begin position="1"/>
        <end position="122"/>
    </location>
</feature>
<protein>
    <recommendedName>
        <fullName>Uncharacterized protein F44E2.9</fullName>
    </recommendedName>
</protein>
<accession>Q9GQ63</accession>
<organism>
    <name type="scientific">Caenorhabditis elegans</name>
    <dbReference type="NCBI Taxonomy" id="6239"/>
    <lineage>
        <taxon>Eukaryota</taxon>
        <taxon>Metazoa</taxon>
        <taxon>Ecdysozoa</taxon>
        <taxon>Nematoda</taxon>
        <taxon>Chromadorea</taxon>
        <taxon>Rhabditida</taxon>
        <taxon>Rhabditina</taxon>
        <taxon>Rhabditomorpha</taxon>
        <taxon>Rhabditoidea</taxon>
        <taxon>Rhabditidae</taxon>
        <taxon>Peloderinae</taxon>
        <taxon>Caenorhabditis</taxon>
    </lineage>
</organism>
<gene>
    <name type="ORF">F44E2.9</name>
</gene>
<name>YL59_CAEEL</name>
<sequence>MFSITRRLLSKNWKFLPNRERIVFKNKKEAFFDFVKVSGANILWQIGLAVLVLEFAFPTPDIVYDLKRLISPDFDLFCKSGNLVDFEMDFENKLRSIRREEIRSLEQYTNAKSPEAKFGGII</sequence>
<reference key="1">
    <citation type="journal article" date="1994" name="Nature">
        <title>2.2 Mb of contiguous nucleotide sequence from chromosome III of C. elegans.</title>
        <authorList>
            <person name="Wilson R."/>
            <person name="Ainscough R."/>
            <person name="Anderson K."/>
            <person name="Baynes C."/>
            <person name="Berks M."/>
            <person name="Bonfield J."/>
            <person name="Burton J."/>
            <person name="Connell M."/>
            <person name="Copsey T."/>
            <person name="Cooper J."/>
            <person name="Coulson A."/>
            <person name="Craxton M."/>
            <person name="Dear S."/>
            <person name="Du Z."/>
            <person name="Durbin R."/>
            <person name="Favello A."/>
            <person name="Fraser A."/>
            <person name="Fulton L."/>
            <person name="Gardner A."/>
            <person name="Green P."/>
            <person name="Hawkins T."/>
            <person name="Hillier L."/>
            <person name="Jier M."/>
            <person name="Johnston L."/>
            <person name="Jones M."/>
            <person name="Kershaw J."/>
            <person name="Kirsten J."/>
            <person name="Laisster N."/>
            <person name="Latreille P."/>
            <person name="Lightning J."/>
            <person name="Lloyd C."/>
            <person name="Mortimore B."/>
            <person name="O'Callaghan M."/>
            <person name="Parsons J."/>
            <person name="Percy C."/>
            <person name="Rifken L."/>
            <person name="Roopra A."/>
            <person name="Saunders D."/>
            <person name="Shownkeen R."/>
            <person name="Sims M."/>
            <person name="Smaldon N."/>
            <person name="Smith A."/>
            <person name="Smith M."/>
            <person name="Sonnhammer E."/>
            <person name="Staden R."/>
            <person name="Sulston J."/>
            <person name="Thierry-Mieg J."/>
            <person name="Thomas K."/>
            <person name="Vaudin M."/>
            <person name="Vaughan K."/>
            <person name="Waterston R."/>
            <person name="Watson A."/>
            <person name="Weinstock L."/>
            <person name="Wilkinson-Sproat J."/>
            <person name="Wohldman P."/>
        </authorList>
    </citation>
    <scope>NUCLEOTIDE SEQUENCE [LARGE SCALE GENOMIC DNA]</scope>
    <source>
        <strain>Bristol N2</strain>
    </source>
</reference>
<reference key="2">
    <citation type="journal article" date="1998" name="Science">
        <title>Genome sequence of the nematode C. elegans: a platform for investigating biology.</title>
        <authorList>
            <consortium name="The C. elegans sequencing consortium"/>
        </authorList>
    </citation>
    <scope>NUCLEOTIDE SEQUENCE [LARGE SCALE GENOMIC DNA]</scope>
    <source>
        <strain>Bristol N2</strain>
    </source>
</reference>
<reference key="3">
    <citation type="submission" date="2000-08" db="EMBL/GenBank/DDBJ databases">
        <title>The Caenorhabditis elegans transcriptome project, a complementary view of the genome.</title>
        <authorList>
            <person name="Kohara Y."/>
            <person name="Shin-i T."/>
            <person name="Suzuki Y."/>
            <person name="Sugano S."/>
            <person name="Potdevin M."/>
            <person name="Thierry-Mieg Y."/>
            <person name="Thierry-Mieg D."/>
            <person name="Thierry-Mieg J."/>
        </authorList>
    </citation>
    <scope>NUCLEOTIDE SEQUENCE [LARGE SCALE MRNA]</scope>
    <source>
        <strain>Bristol N2</strain>
    </source>
</reference>
<proteinExistence type="evidence at transcript level"/>